<keyword id="KW-0963">Cytoplasm</keyword>
<keyword id="KW-0413">Isomerase</keyword>
<protein>
    <recommendedName>
        <fullName evidence="1">(4S)-4-hydroxy-5-phosphonooxypentane-2,3-dione isomerase</fullName>
        <ecNumber evidence="1">5.3.1.32</ecNumber>
    </recommendedName>
    <alternativeName>
        <fullName evidence="1">Autoinducer 2-degrading protein LsrG</fullName>
        <shortName evidence="1">AI-2-degrading protein LsrG</shortName>
    </alternativeName>
    <alternativeName>
        <fullName evidence="1">Phospho-(S)-4,5-dihydroxy-2,3-pentanedione isomerase</fullName>
    </alternativeName>
    <alternativeName>
        <fullName evidence="1">Phospho-AI-2 isomerase</fullName>
    </alternativeName>
</protein>
<gene>
    <name evidence="1" type="primary">lsrG</name>
    <name type="ordered locus">YPA_3878</name>
</gene>
<proteinExistence type="inferred from homology"/>
<feature type="chain" id="PRO_0000351580" description="(4S)-4-hydroxy-5-phosphonooxypentane-2,3-dione isomerase">
    <location>
        <begin position="1"/>
        <end position="96"/>
    </location>
</feature>
<feature type="domain" description="ABM" evidence="1">
    <location>
        <begin position="2"/>
        <end position="91"/>
    </location>
</feature>
<name>LSRG_YERPA</name>
<accession>Q1C133</accession>
<reference key="1">
    <citation type="journal article" date="2006" name="J. Bacteriol.">
        <title>Complete genome sequence of Yersinia pestis strains Antiqua and Nepal516: evidence of gene reduction in an emerging pathogen.</title>
        <authorList>
            <person name="Chain P.S.G."/>
            <person name="Hu P."/>
            <person name="Malfatti S.A."/>
            <person name="Radnedge L."/>
            <person name="Larimer F."/>
            <person name="Vergez L.M."/>
            <person name="Worsham P."/>
            <person name="Chu M.C."/>
            <person name="Andersen G.L."/>
        </authorList>
    </citation>
    <scope>NUCLEOTIDE SEQUENCE [LARGE SCALE GENOMIC DNA]</scope>
    <source>
        <strain>Antiqua</strain>
    </source>
</reference>
<sequence length="96" mass="11098">MHVTLVEINVKEDKVDQFIEVFRANHLGSIREAGNLRFDVLRDEHIPTRFYIYEAYTDEAAVAIHKTTPHYLQCVEQLAPLMTGPRKKTVFIGLMP</sequence>
<organism>
    <name type="scientific">Yersinia pestis bv. Antiqua (strain Antiqua)</name>
    <dbReference type="NCBI Taxonomy" id="360102"/>
    <lineage>
        <taxon>Bacteria</taxon>
        <taxon>Pseudomonadati</taxon>
        <taxon>Pseudomonadota</taxon>
        <taxon>Gammaproteobacteria</taxon>
        <taxon>Enterobacterales</taxon>
        <taxon>Yersiniaceae</taxon>
        <taxon>Yersinia</taxon>
    </lineage>
</organism>
<dbReference type="EC" id="5.3.1.32" evidence="1"/>
<dbReference type="EMBL" id="CP000308">
    <property type="protein sequence ID" value="ABG15839.1"/>
    <property type="molecule type" value="Genomic_DNA"/>
</dbReference>
<dbReference type="RefSeq" id="WP_002209186.1">
    <property type="nucleotide sequence ID" value="NZ_CP009906.1"/>
</dbReference>
<dbReference type="SMR" id="Q1C133"/>
<dbReference type="GeneID" id="96664050"/>
<dbReference type="KEGG" id="ypa:YPA_3878"/>
<dbReference type="Proteomes" id="UP000001971">
    <property type="component" value="Chromosome"/>
</dbReference>
<dbReference type="GO" id="GO:0005829">
    <property type="term" value="C:cytosol"/>
    <property type="evidence" value="ECO:0007669"/>
    <property type="project" value="TreeGrafter"/>
</dbReference>
<dbReference type="GO" id="GO:0002952">
    <property type="term" value="F:(4S)-4-hydroxy-5-phosphonooxypentane-2,3-dione isomerase activity"/>
    <property type="evidence" value="ECO:0007669"/>
    <property type="project" value="UniProtKB-EC"/>
</dbReference>
<dbReference type="GO" id="GO:0016491">
    <property type="term" value="F:oxidoreductase activity"/>
    <property type="evidence" value="ECO:0007669"/>
    <property type="project" value="TreeGrafter"/>
</dbReference>
<dbReference type="FunFam" id="3.30.70.100:FF:000016">
    <property type="entry name" value="(4S)-4-hydroxy-5-phosphonooxypentane-2,3-dione isomerase"/>
    <property type="match status" value="1"/>
</dbReference>
<dbReference type="Gene3D" id="3.30.70.100">
    <property type="match status" value="1"/>
</dbReference>
<dbReference type="HAMAP" id="MF_02051">
    <property type="entry name" value="LsrG"/>
    <property type="match status" value="1"/>
</dbReference>
<dbReference type="InterPro" id="IPR007138">
    <property type="entry name" value="ABM_dom"/>
</dbReference>
<dbReference type="InterPro" id="IPR050744">
    <property type="entry name" value="AI-2_Isomerase_LsrG"/>
</dbReference>
<dbReference type="InterPro" id="IPR011008">
    <property type="entry name" value="Dimeric_a/b-barrel"/>
</dbReference>
<dbReference type="InterPro" id="IPR033672">
    <property type="entry name" value="LsrG"/>
</dbReference>
<dbReference type="NCBIfam" id="NF007791">
    <property type="entry name" value="PRK10486.1"/>
    <property type="match status" value="1"/>
</dbReference>
<dbReference type="PANTHER" id="PTHR33336:SF1">
    <property type="entry name" value="(4S)-4-HYDROXY-5-PHOSPHONOOXYPENTANE-2,3-DIONE ISOMERASE"/>
    <property type="match status" value="1"/>
</dbReference>
<dbReference type="PANTHER" id="PTHR33336">
    <property type="entry name" value="QUINOL MONOOXYGENASE YGIN-RELATED"/>
    <property type="match status" value="1"/>
</dbReference>
<dbReference type="Pfam" id="PF03992">
    <property type="entry name" value="ABM"/>
    <property type="match status" value="1"/>
</dbReference>
<dbReference type="SUPFAM" id="SSF54909">
    <property type="entry name" value="Dimeric alpha+beta barrel"/>
    <property type="match status" value="1"/>
</dbReference>
<dbReference type="PROSITE" id="PS51725">
    <property type="entry name" value="ABM"/>
    <property type="match status" value="1"/>
</dbReference>
<comment type="function">
    <text evidence="1">Involved in the degradation of phospho-AI-2, thereby terminating induction of the lsr operon and closing the AI-2 signaling cycle. Catalyzes the conversion of (4S)-4-hydroxy-5-phosphonooxypentane-2,3-dione (P-DPD) to 3-hydroxy-5-phosphonooxypentane-2,4-dione (P-HPD).</text>
</comment>
<comment type="catalytic activity">
    <reaction evidence="1">
        <text>(2S)-2-hydroxy-3,4-dioxopentyl phosphate = 3-hydroxy-2,4-dioxopentyl phosphate</text>
        <dbReference type="Rhea" id="RHEA:44360"/>
        <dbReference type="ChEBI" id="CHEBI:71677"/>
        <dbReference type="ChEBI" id="CHEBI:84359"/>
        <dbReference type="EC" id="5.3.1.32"/>
    </reaction>
</comment>
<comment type="subunit">
    <text evidence="1">Homodimer.</text>
</comment>
<comment type="subcellular location">
    <subcellularLocation>
        <location evidence="1">Cytoplasm</location>
    </subcellularLocation>
</comment>
<comment type="similarity">
    <text evidence="1">Belongs to the LsrG family.</text>
</comment>
<evidence type="ECO:0000255" key="1">
    <source>
        <dbReference type="HAMAP-Rule" id="MF_02051"/>
    </source>
</evidence>